<sequence length="428" mass="47174">MATAFAPTKLTATVPLHGSHENRLLLPIRLAPPSSFLGSTRSLSLRRLNHSNATRRSPVVSVQEVVKEKQSTNNTSLLITKEEGLELYEDMILGRSFEDMCAQMYYRGKMFGFVHLYNGQEAVSTGFIKLLTKSDSVVSTYRDHVHALSKGVSARAVMSELFGKVTGCCRGQGGSMHMFSKEHNMLGGFAFIGEGIPVATGAAFSSKYRREVLKQDCDDVTVAFFGDGTCNNGQFFECLNMAALYKLPIIFVVENNLWAIGMSHLRATSDPEIWKKGPAFGMPGVHVDGMDVLKVREVAKEAVTRARRGEGPTLVECETYRFRGHSLADPDELRDAAEKAKYAARDPIAALKKYLIENKLAKEAELKSIEKKIDELVEEAVEFADASPQPGRSQLLENVFADPKGFGIGPDGRYRCEDPKFTEGTAQV</sequence>
<accession>O24457</accession>
<accession>Q9MAM6</accession>
<organism>
    <name type="scientific">Arabidopsis thaliana</name>
    <name type="common">Mouse-ear cress</name>
    <dbReference type="NCBI Taxonomy" id="3702"/>
    <lineage>
        <taxon>Eukaryota</taxon>
        <taxon>Viridiplantae</taxon>
        <taxon>Streptophyta</taxon>
        <taxon>Embryophyta</taxon>
        <taxon>Tracheophyta</taxon>
        <taxon>Spermatophyta</taxon>
        <taxon>Magnoliopsida</taxon>
        <taxon>eudicotyledons</taxon>
        <taxon>Gunneridae</taxon>
        <taxon>Pentapetalae</taxon>
        <taxon>rosids</taxon>
        <taxon>malvids</taxon>
        <taxon>Brassicales</taxon>
        <taxon>Brassicaceae</taxon>
        <taxon>Camelineae</taxon>
        <taxon>Arabidopsis</taxon>
    </lineage>
</organism>
<gene>
    <name type="primary">PDH-E1 ALPHA</name>
    <name type="ordered locus">At1g01090</name>
    <name type="ORF">T25K16.8</name>
</gene>
<dbReference type="EC" id="1.2.4.1"/>
<dbReference type="EMBL" id="U80185">
    <property type="protein sequence ID" value="AAB86803.1"/>
    <property type="molecule type" value="mRNA"/>
</dbReference>
<dbReference type="EMBL" id="AC007323">
    <property type="protein sequence ID" value="AAF26472.1"/>
    <property type="status" value="ALT_SEQ"/>
    <property type="molecule type" value="Genomic_DNA"/>
</dbReference>
<dbReference type="EMBL" id="CP002684">
    <property type="protein sequence ID" value="AEE27233.1"/>
    <property type="molecule type" value="Genomic_DNA"/>
</dbReference>
<dbReference type="EMBL" id="AY052721">
    <property type="protein sequence ID" value="AAK96625.1"/>
    <property type="molecule type" value="mRNA"/>
</dbReference>
<dbReference type="EMBL" id="AY063724">
    <property type="protein sequence ID" value="AAL36074.1"/>
    <property type="molecule type" value="mRNA"/>
</dbReference>
<dbReference type="EMBL" id="AK226909">
    <property type="protein sequence ID" value="BAE98984.1"/>
    <property type="molecule type" value="mRNA"/>
</dbReference>
<dbReference type="RefSeq" id="NP_171617.1">
    <property type="nucleotide sequence ID" value="NM_099991.4"/>
</dbReference>
<dbReference type="SMR" id="O24457"/>
<dbReference type="BioGRID" id="24664">
    <property type="interactions" value="9"/>
</dbReference>
<dbReference type="FunCoup" id="O24457">
    <property type="interactions" value="909"/>
</dbReference>
<dbReference type="IntAct" id="O24457">
    <property type="interactions" value="3"/>
</dbReference>
<dbReference type="STRING" id="3702.O24457"/>
<dbReference type="PaxDb" id="3702-AT1G01090.1"/>
<dbReference type="ProMEX" id="O24457"/>
<dbReference type="ProteomicsDB" id="250788"/>
<dbReference type="EnsemblPlants" id="AT1G01090.1">
    <property type="protein sequence ID" value="AT1G01090.1"/>
    <property type="gene ID" value="AT1G01090"/>
</dbReference>
<dbReference type="GeneID" id="839429"/>
<dbReference type="Gramene" id="AT1G01090.1">
    <property type="protein sequence ID" value="AT1G01090.1"/>
    <property type="gene ID" value="AT1G01090"/>
</dbReference>
<dbReference type="KEGG" id="ath:AT1G01090"/>
<dbReference type="Araport" id="AT1G01090"/>
<dbReference type="TAIR" id="AT1G01090">
    <property type="gene designation" value="PDH-E1 ALPHA"/>
</dbReference>
<dbReference type="eggNOG" id="KOG0225">
    <property type="taxonomic scope" value="Eukaryota"/>
</dbReference>
<dbReference type="HOGENOM" id="CLU_029393_5_1_1"/>
<dbReference type="InParanoid" id="O24457"/>
<dbReference type="OMA" id="ETYRWRE"/>
<dbReference type="PhylomeDB" id="O24457"/>
<dbReference type="BioCyc" id="ARA:AT1G01090-MONOMER"/>
<dbReference type="PRO" id="PR:O24457"/>
<dbReference type="Proteomes" id="UP000006548">
    <property type="component" value="Chromosome 1"/>
</dbReference>
<dbReference type="ExpressionAtlas" id="O24457">
    <property type="expression patterns" value="baseline and differential"/>
</dbReference>
<dbReference type="GO" id="GO:0009507">
    <property type="term" value="C:chloroplast"/>
    <property type="evidence" value="ECO:0007005"/>
    <property type="project" value="TAIR"/>
</dbReference>
<dbReference type="GO" id="GO:0009941">
    <property type="term" value="C:chloroplast envelope"/>
    <property type="evidence" value="ECO:0007005"/>
    <property type="project" value="TAIR"/>
</dbReference>
<dbReference type="GO" id="GO:0009570">
    <property type="term" value="C:chloroplast stroma"/>
    <property type="evidence" value="ECO:0007005"/>
    <property type="project" value="TAIR"/>
</dbReference>
<dbReference type="GO" id="GO:0009536">
    <property type="term" value="C:plastid"/>
    <property type="evidence" value="ECO:0007005"/>
    <property type="project" value="TAIR"/>
</dbReference>
<dbReference type="GO" id="GO:0046872">
    <property type="term" value="F:metal ion binding"/>
    <property type="evidence" value="ECO:0007669"/>
    <property type="project" value="UniProtKB-KW"/>
</dbReference>
<dbReference type="GO" id="GO:0004739">
    <property type="term" value="F:pyruvate dehydrogenase (acetyl-transferring) activity"/>
    <property type="evidence" value="ECO:0007669"/>
    <property type="project" value="UniProtKB-EC"/>
</dbReference>
<dbReference type="GO" id="GO:0006086">
    <property type="term" value="P:pyruvate decarboxylation to acetyl-CoA"/>
    <property type="evidence" value="ECO:0007669"/>
    <property type="project" value="InterPro"/>
</dbReference>
<dbReference type="CDD" id="cd02000">
    <property type="entry name" value="TPP_E1_PDC_ADC_BCADC"/>
    <property type="match status" value="1"/>
</dbReference>
<dbReference type="FunFam" id="3.40.50.970:FF:000013">
    <property type="entry name" value="Pyruvate dehydrogenase E1 component subunit alpha"/>
    <property type="match status" value="1"/>
</dbReference>
<dbReference type="Gene3D" id="3.40.50.970">
    <property type="match status" value="1"/>
</dbReference>
<dbReference type="InterPro" id="IPR001017">
    <property type="entry name" value="DH_E1"/>
</dbReference>
<dbReference type="InterPro" id="IPR050642">
    <property type="entry name" value="PDH_E1_Alpha_Subunit"/>
</dbReference>
<dbReference type="InterPro" id="IPR017597">
    <property type="entry name" value="Pyrv_DH_E1_asu_subgrp-y"/>
</dbReference>
<dbReference type="InterPro" id="IPR029061">
    <property type="entry name" value="THDP-binding"/>
</dbReference>
<dbReference type="NCBIfam" id="TIGR03182">
    <property type="entry name" value="PDH_E1_alph_y"/>
    <property type="match status" value="1"/>
</dbReference>
<dbReference type="PANTHER" id="PTHR11516:SF60">
    <property type="entry name" value="PYRUVATE DEHYDROGENASE E1 COMPONENT SUBUNIT ALPHA"/>
    <property type="match status" value="1"/>
</dbReference>
<dbReference type="PANTHER" id="PTHR11516">
    <property type="entry name" value="PYRUVATE DEHYDROGENASE E1 COMPONENT, ALPHA SUBUNIT BACTERIAL AND ORGANELLAR"/>
    <property type="match status" value="1"/>
</dbReference>
<dbReference type="Pfam" id="PF00676">
    <property type="entry name" value="E1_dh"/>
    <property type="match status" value="1"/>
</dbReference>
<dbReference type="SUPFAM" id="SSF52518">
    <property type="entry name" value="Thiamin diphosphate-binding fold (THDP-binding)"/>
    <property type="match status" value="1"/>
</dbReference>
<comment type="function">
    <text evidence="1">The pyruvate dehydrogenase complex catalyzes the overall conversion of pyruvate to acetyl-CoA and CO(2). It contains multiple copies of three enzymatic components: pyruvate dehydrogenase (E1), dihydrolipoamide acetyltransferase (E2) and lipoamide dehydrogenase (E3) (By similarity).</text>
</comment>
<comment type="catalytic activity">
    <reaction>
        <text>N(6)-[(R)-lipoyl]-L-lysyl-[protein] + pyruvate + H(+) = N(6)-[(R)-S(8)-acetyldihydrolipoyl]-L-lysyl-[protein] + CO2</text>
        <dbReference type="Rhea" id="RHEA:19189"/>
        <dbReference type="Rhea" id="RHEA-COMP:10474"/>
        <dbReference type="Rhea" id="RHEA-COMP:10478"/>
        <dbReference type="ChEBI" id="CHEBI:15361"/>
        <dbReference type="ChEBI" id="CHEBI:15378"/>
        <dbReference type="ChEBI" id="CHEBI:16526"/>
        <dbReference type="ChEBI" id="CHEBI:83099"/>
        <dbReference type="ChEBI" id="CHEBI:83111"/>
        <dbReference type="EC" id="1.2.4.1"/>
    </reaction>
</comment>
<comment type="cofactor">
    <cofactor evidence="2">
        <name>thiamine diphosphate</name>
        <dbReference type="ChEBI" id="CHEBI:58937"/>
    </cofactor>
    <cofactor evidence="2">
        <name>Mg(2+)</name>
        <dbReference type="ChEBI" id="CHEBI:18420"/>
    </cofactor>
</comment>
<comment type="subunit">
    <text evidence="1">Tetramer of 2 alpha and 2 beta subunits.</text>
</comment>
<comment type="subcellular location">
    <subcellularLocation>
        <location evidence="4">Plastid</location>
        <location evidence="4">Chloroplast</location>
    </subcellularLocation>
</comment>
<comment type="sequence caution" evidence="4">
    <conflict type="erroneous gene model prediction">
        <sequence resource="EMBL-CDS" id="AAF26472"/>
    </conflict>
    <text>The predicted gene has been split into 2 genes: At1g01080 and At1g01090.</text>
</comment>
<keyword id="KW-0150">Chloroplast</keyword>
<keyword id="KW-0460">Magnesium</keyword>
<keyword id="KW-0479">Metal-binding</keyword>
<keyword id="KW-0560">Oxidoreductase</keyword>
<keyword id="KW-0934">Plastid</keyword>
<keyword id="KW-0670">Pyruvate</keyword>
<keyword id="KW-1185">Reference proteome</keyword>
<keyword id="KW-0786">Thiamine pyrophosphate</keyword>
<keyword id="KW-0809">Transit peptide</keyword>
<evidence type="ECO:0000250" key="1"/>
<evidence type="ECO:0000250" key="2">
    <source>
        <dbReference type="UniProtKB" id="P08559"/>
    </source>
</evidence>
<evidence type="ECO:0000255" key="3"/>
<evidence type="ECO:0000305" key="4"/>
<name>ODPA3_ARATH</name>
<proteinExistence type="evidence at transcript level"/>
<feature type="transit peptide" description="Chloroplast" evidence="3">
    <location>
        <begin position="1"/>
        <end position="61"/>
    </location>
</feature>
<feature type="chain" id="PRO_0000421367" description="Pyruvate dehydrogenase E1 component subunit alpha-3, chloroplastic">
    <location>
        <begin position="62"/>
        <end position="428"/>
    </location>
</feature>
<feature type="binding site" evidence="2">
    <location>
        <position position="115"/>
    </location>
    <ligand>
        <name>pyruvate</name>
        <dbReference type="ChEBI" id="CHEBI:15361"/>
    </ligand>
</feature>
<feature type="binding site" evidence="2">
    <location>
        <position position="141"/>
    </location>
    <ligand>
        <name>pyruvate</name>
        <dbReference type="ChEBI" id="CHEBI:15361"/>
    </ligand>
</feature>
<feature type="binding site" evidence="2">
    <location>
        <position position="141"/>
    </location>
    <ligand>
        <name>thiamine diphosphate</name>
        <dbReference type="ChEBI" id="CHEBI:58937"/>
        <note>ligand shared with beta subunit</note>
    </ligand>
</feature>
<feature type="binding site" evidence="2">
    <location>
        <position position="142"/>
    </location>
    <ligand>
        <name>pyruvate</name>
        <dbReference type="ChEBI" id="CHEBI:15361"/>
    </ligand>
</feature>
<feature type="binding site" evidence="2">
    <location>
        <position position="142"/>
    </location>
    <ligand>
        <name>thiamine diphosphate</name>
        <dbReference type="ChEBI" id="CHEBI:58937"/>
        <note>ligand shared with beta subunit</note>
    </ligand>
</feature>
<feature type="binding site" evidence="2">
    <location>
        <position position="190"/>
    </location>
    <ligand>
        <name>pyruvate</name>
        <dbReference type="ChEBI" id="CHEBI:15361"/>
    </ligand>
</feature>
<feature type="binding site" evidence="2">
    <location>
        <position position="190"/>
    </location>
    <ligand>
        <name>thiamine diphosphate</name>
        <dbReference type="ChEBI" id="CHEBI:58937"/>
        <note>ligand shared with beta subunit</note>
    </ligand>
</feature>
<feature type="binding site" evidence="2">
    <location>
        <position position="192"/>
    </location>
    <ligand>
        <name>pyruvate</name>
        <dbReference type="ChEBI" id="CHEBI:15361"/>
    </ligand>
</feature>
<feature type="binding site" evidence="2">
    <location>
        <position position="192"/>
    </location>
    <ligand>
        <name>thiamine diphosphate</name>
        <dbReference type="ChEBI" id="CHEBI:58937"/>
        <note>ligand shared with beta subunit</note>
    </ligand>
</feature>
<feature type="binding site" evidence="2">
    <location>
        <position position="227"/>
    </location>
    <ligand>
        <name>Mg(2+)</name>
        <dbReference type="ChEBI" id="CHEBI:18420"/>
    </ligand>
</feature>
<feature type="binding site" evidence="2">
    <location>
        <position position="227"/>
    </location>
    <ligand>
        <name>pyruvate</name>
        <dbReference type="ChEBI" id="CHEBI:15361"/>
    </ligand>
</feature>
<feature type="binding site" evidence="2">
    <location>
        <position position="227"/>
    </location>
    <ligand>
        <name>thiamine diphosphate</name>
        <dbReference type="ChEBI" id="CHEBI:58937"/>
        <note>ligand shared with beta subunit</note>
    </ligand>
</feature>
<feature type="binding site" evidence="2">
    <location>
        <position position="228"/>
    </location>
    <ligand>
        <name>pyruvate</name>
        <dbReference type="ChEBI" id="CHEBI:15361"/>
    </ligand>
</feature>
<feature type="binding site" evidence="2">
    <location>
        <position position="228"/>
    </location>
    <ligand>
        <name>thiamine diphosphate</name>
        <dbReference type="ChEBI" id="CHEBI:58937"/>
        <note>ligand shared with beta subunit</note>
    </ligand>
</feature>
<feature type="binding site" evidence="2">
    <location>
        <position position="256"/>
    </location>
    <ligand>
        <name>Mg(2+)</name>
        <dbReference type="ChEBI" id="CHEBI:18420"/>
    </ligand>
</feature>
<feature type="binding site" evidence="2">
    <location>
        <position position="256"/>
    </location>
    <ligand>
        <name>pyruvate</name>
        <dbReference type="ChEBI" id="CHEBI:15361"/>
    </ligand>
</feature>
<feature type="binding site" evidence="2">
    <location>
        <position position="256"/>
    </location>
    <ligand>
        <name>thiamine diphosphate</name>
        <dbReference type="ChEBI" id="CHEBI:58937"/>
        <note>ligand shared with beta subunit</note>
    </ligand>
</feature>
<feature type="binding site" evidence="2">
    <location>
        <position position="325"/>
    </location>
    <ligand>
        <name>thiamine diphosphate</name>
        <dbReference type="ChEBI" id="CHEBI:58937"/>
        <note>ligand shared with beta subunit</note>
    </ligand>
</feature>
<reference key="1">
    <citation type="journal article" date="1997" name="Biochim. Biophys. Acta">
        <title>Cloning and molecular analyses of the Arabidopsis thaliana plastid pyruvate dehydrogenase subunits.</title>
        <authorList>
            <person name="Johnston M.L."/>
            <person name="Luethy M.H."/>
            <person name="Miernyk J.A."/>
            <person name="Randall D.D."/>
        </authorList>
    </citation>
    <scope>NUCLEOTIDE SEQUENCE [MRNA]</scope>
    <source>
        <strain>cv. Columbia</strain>
    </source>
</reference>
<reference key="2">
    <citation type="journal article" date="2000" name="Nature">
        <title>Sequence and analysis of chromosome 1 of the plant Arabidopsis thaliana.</title>
        <authorList>
            <person name="Theologis A."/>
            <person name="Ecker J.R."/>
            <person name="Palm C.J."/>
            <person name="Federspiel N.A."/>
            <person name="Kaul S."/>
            <person name="White O."/>
            <person name="Alonso J."/>
            <person name="Altafi H."/>
            <person name="Araujo R."/>
            <person name="Bowman C.L."/>
            <person name="Brooks S.Y."/>
            <person name="Buehler E."/>
            <person name="Chan A."/>
            <person name="Chao Q."/>
            <person name="Chen H."/>
            <person name="Cheuk R.F."/>
            <person name="Chin C.W."/>
            <person name="Chung M.K."/>
            <person name="Conn L."/>
            <person name="Conway A.B."/>
            <person name="Conway A.R."/>
            <person name="Creasy T.H."/>
            <person name="Dewar K."/>
            <person name="Dunn P."/>
            <person name="Etgu P."/>
            <person name="Feldblyum T.V."/>
            <person name="Feng J.-D."/>
            <person name="Fong B."/>
            <person name="Fujii C.Y."/>
            <person name="Gill J.E."/>
            <person name="Goldsmith A.D."/>
            <person name="Haas B."/>
            <person name="Hansen N.F."/>
            <person name="Hughes B."/>
            <person name="Huizar L."/>
            <person name="Hunter J.L."/>
            <person name="Jenkins J."/>
            <person name="Johnson-Hopson C."/>
            <person name="Khan S."/>
            <person name="Khaykin E."/>
            <person name="Kim C.J."/>
            <person name="Koo H.L."/>
            <person name="Kremenetskaia I."/>
            <person name="Kurtz D.B."/>
            <person name="Kwan A."/>
            <person name="Lam B."/>
            <person name="Langin-Hooper S."/>
            <person name="Lee A."/>
            <person name="Lee J.M."/>
            <person name="Lenz C.A."/>
            <person name="Li J.H."/>
            <person name="Li Y.-P."/>
            <person name="Lin X."/>
            <person name="Liu S.X."/>
            <person name="Liu Z.A."/>
            <person name="Luros J.S."/>
            <person name="Maiti R."/>
            <person name="Marziali A."/>
            <person name="Militscher J."/>
            <person name="Miranda M."/>
            <person name="Nguyen M."/>
            <person name="Nierman W.C."/>
            <person name="Osborne B.I."/>
            <person name="Pai G."/>
            <person name="Peterson J."/>
            <person name="Pham P.K."/>
            <person name="Rizzo M."/>
            <person name="Rooney T."/>
            <person name="Rowley D."/>
            <person name="Sakano H."/>
            <person name="Salzberg S.L."/>
            <person name="Schwartz J.R."/>
            <person name="Shinn P."/>
            <person name="Southwick A.M."/>
            <person name="Sun H."/>
            <person name="Tallon L.J."/>
            <person name="Tambunga G."/>
            <person name="Toriumi M.J."/>
            <person name="Town C.D."/>
            <person name="Utterback T."/>
            <person name="Van Aken S."/>
            <person name="Vaysberg M."/>
            <person name="Vysotskaia V.S."/>
            <person name="Walker M."/>
            <person name="Wu D."/>
            <person name="Yu G."/>
            <person name="Fraser C.M."/>
            <person name="Venter J.C."/>
            <person name="Davis R.W."/>
        </authorList>
    </citation>
    <scope>NUCLEOTIDE SEQUENCE [LARGE SCALE GENOMIC DNA]</scope>
    <source>
        <strain>cv. Columbia</strain>
    </source>
</reference>
<reference key="3">
    <citation type="journal article" date="2017" name="Plant J.">
        <title>Araport11: a complete reannotation of the Arabidopsis thaliana reference genome.</title>
        <authorList>
            <person name="Cheng C.Y."/>
            <person name="Krishnakumar V."/>
            <person name="Chan A.P."/>
            <person name="Thibaud-Nissen F."/>
            <person name="Schobel S."/>
            <person name="Town C.D."/>
        </authorList>
    </citation>
    <scope>GENOME REANNOTATION</scope>
    <source>
        <strain>cv. Columbia</strain>
    </source>
</reference>
<reference key="4">
    <citation type="journal article" date="2003" name="Science">
        <title>Empirical analysis of transcriptional activity in the Arabidopsis genome.</title>
        <authorList>
            <person name="Yamada K."/>
            <person name="Lim J."/>
            <person name="Dale J.M."/>
            <person name="Chen H."/>
            <person name="Shinn P."/>
            <person name="Palm C.J."/>
            <person name="Southwick A.M."/>
            <person name="Wu H.C."/>
            <person name="Kim C.J."/>
            <person name="Nguyen M."/>
            <person name="Pham P.K."/>
            <person name="Cheuk R.F."/>
            <person name="Karlin-Newmann G."/>
            <person name="Liu S.X."/>
            <person name="Lam B."/>
            <person name="Sakano H."/>
            <person name="Wu T."/>
            <person name="Yu G."/>
            <person name="Miranda M."/>
            <person name="Quach H.L."/>
            <person name="Tripp M."/>
            <person name="Chang C.H."/>
            <person name="Lee J.M."/>
            <person name="Toriumi M.J."/>
            <person name="Chan M.M."/>
            <person name="Tang C.C."/>
            <person name="Onodera C.S."/>
            <person name="Deng J.M."/>
            <person name="Akiyama K."/>
            <person name="Ansari Y."/>
            <person name="Arakawa T."/>
            <person name="Banh J."/>
            <person name="Banno F."/>
            <person name="Bowser L."/>
            <person name="Brooks S.Y."/>
            <person name="Carninci P."/>
            <person name="Chao Q."/>
            <person name="Choy N."/>
            <person name="Enju A."/>
            <person name="Goldsmith A.D."/>
            <person name="Gurjal M."/>
            <person name="Hansen N.F."/>
            <person name="Hayashizaki Y."/>
            <person name="Johnson-Hopson C."/>
            <person name="Hsuan V.W."/>
            <person name="Iida K."/>
            <person name="Karnes M."/>
            <person name="Khan S."/>
            <person name="Koesema E."/>
            <person name="Ishida J."/>
            <person name="Jiang P.X."/>
            <person name="Jones T."/>
            <person name="Kawai J."/>
            <person name="Kamiya A."/>
            <person name="Meyers C."/>
            <person name="Nakajima M."/>
            <person name="Narusaka M."/>
            <person name="Seki M."/>
            <person name="Sakurai T."/>
            <person name="Satou M."/>
            <person name="Tamse R."/>
            <person name="Vaysberg M."/>
            <person name="Wallender E.K."/>
            <person name="Wong C."/>
            <person name="Yamamura Y."/>
            <person name="Yuan S."/>
            <person name="Shinozaki K."/>
            <person name="Davis R.W."/>
            <person name="Theologis A."/>
            <person name="Ecker J.R."/>
        </authorList>
    </citation>
    <scope>NUCLEOTIDE SEQUENCE [LARGE SCALE MRNA]</scope>
    <source>
        <strain>cv. Columbia</strain>
    </source>
</reference>
<reference key="5">
    <citation type="submission" date="2006-07" db="EMBL/GenBank/DDBJ databases">
        <title>Large-scale analysis of RIKEN Arabidopsis full-length (RAFL) cDNAs.</title>
        <authorList>
            <person name="Totoki Y."/>
            <person name="Seki M."/>
            <person name="Ishida J."/>
            <person name="Nakajima M."/>
            <person name="Enju A."/>
            <person name="Kamiya A."/>
            <person name="Narusaka M."/>
            <person name="Shin-i T."/>
            <person name="Nakagawa M."/>
            <person name="Sakamoto N."/>
            <person name="Oishi K."/>
            <person name="Kohara Y."/>
            <person name="Kobayashi M."/>
            <person name="Toyoda A."/>
            <person name="Sakaki Y."/>
            <person name="Sakurai T."/>
            <person name="Iida K."/>
            <person name="Akiyama K."/>
            <person name="Satou M."/>
            <person name="Toyoda T."/>
            <person name="Konagaya A."/>
            <person name="Carninci P."/>
            <person name="Kawai J."/>
            <person name="Hayashizaki Y."/>
            <person name="Shinozaki K."/>
        </authorList>
    </citation>
    <scope>NUCLEOTIDE SEQUENCE [LARGE SCALE MRNA]</scope>
    <source>
        <strain>cv. Columbia</strain>
    </source>
</reference>
<protein>
    <recommendedName>
        <fullName>Pyruvate dehydrogenase E1 component subunit alpha-3, chloroplastic</fullName>
        <ecNumber>1.2.4.1</ecNumber>
    </recommendedName>
</protein>